<evidence type="ECO:0000269" key="1">
    <source>
    </source>
</evidence>
<evidence type="ECO:0000305" key="2"/>
<proteinExistence type="evidence at transcript level"/>
<sequence>MTAPVWLASPPEVHSALLSAGPGPGSLQAAAAGWSALSAEYAAVAQELSVVVAAVGAGVWQGPSAELFVAAYVPYVAWLVQASADSAAAAGEHEAAAAGYVCALAEMPTLPELAANHLTHAVLVATNFFGINTIPIALNEADYVRMWVQAATVMSAYEAVVGAALVATPHTGPAPVIVKPGANEASNAVAAATITPFPFGELAKFLEMAAQAFTEVGELIMKSAEAWAVGFVELITGLVNFEPWLVLTGMIDMFFATVGFALGVFVLVPLLEFAVVLELAILSIGWIISNIFGAIPVLGGPLLGALAAAVVPGVAGLAGVAGLAALPAVGAAAGAPAALVGSVAPVSGGVVSPQARLVSAVEPAPASTSVSVLASDRGAGALGFVGTAGKESVGQPAGLTVLADEFGDGAPVPMLPGSWGPDLVGVAGDGGLVSV</sequence>
<name>PPE47_MYCTU</name>
<keyword id="KW-1185">Reference proteome</keyword>
<accession>P9WHY7</accession>
<accession>L0TE35</accession>
<accession>O53268</accession>
<accession>O53269</accession>
<reference key="1">
    <citation type="journal article" date="1998" name="Nature">
        <title>Deciphering the biology of Mycobacterium tuberculosis from the complete genome sequence.</title>
        <authorList>
            <person name="Cole S.T."/>
            <person name="Brosch R."/>
            <person name="Parkhill J."/>
            <person name="Garnier T."/>
            <person name="Churcher C.M."/>
            <person name="Harris D.E."/>
            <person name="Gordon S.V."/>
            <person name="Eiglmeier K."/>
            <person name="Gas S."/>
            <person name="Barry C.E. III"/>
            <person name="Tekaia F."/>
            <person name="Badcock K."/>
            <person name="Basham D."/>
            <person name="Brown D."/>
            <person name="Chillingworth T."/>
            <person name="Connor R."/>
            <person name="Davies R.M."/>
            <person name="Devlin K."/>
            <person name="Feltwell T."/>
            <person name="Gentles S."/>
            <person name="Hamlin N."/>
            <person name="Holroyd S."/>
            <person name="Hornsby T."/>
            <person name="Jagels K."/>
            <person name="Krogh A."/>
            <person name="McLean J."/>
            <person name="Moule S."/>
            <person name="Murphy L.D."/>
            <person name="Oliver S."/>
            <person name="Osborne J."/>
            <person name="Quail M.A."/>
            <person name="Rajandream M.A."/>
            <person name="Rogers J."/>
            <person name="Rutter S."/>
            <person name="Seeger K."/>
            <person name="Skelton S."/>
            <person name="Squares S."/>
            <person name="Squares R."/>
            <person name="Sulston J.E."/>
            <person name="Taylor K."/>
            <person name="Whitehead S."/>
            <person name="Barrell B.G."/>
        </authorList>
    </citation>
    <scope>NUCLEOTIDE SEQUENCE [LARGE SCALE GENOMIC DNA]</scope>
    <source>
        <strain>ATCC 25618 / H37Rv</strain>
    </source>
</reference>
<reference key="2">
    <citation type="journal article" date="2006" name="J. Infect. Dis.">
        <title>Mycobacterium tuberculosis invasion and traversal across an in vitro human blood-brain barrier as a pathogenic mechanism for central nervous system tuberculosis.</title>
        <authorList>
            <person name="Jain S.K."/>
            <person name="Paul-Satyaseela M."/>
            <person name="Lamichhane G."/>
            <person name="Kim K.S."/>
            <person name="Bishai W.R."/>
        </authorList>
    </citation>
    <scope>INDUCTION</scope>
    <source>
        <strain>ATCC 25618 / H37Rv</strain>
    </source>
</reference>
<comment type="induction">
    <text evidence="1">Highly up-regulated during the early stages of invasion of the human blood-brain barrier.</text>
</comment>
<comment type="similarity">
    <text evidence="2">Belongs to the mycobacterial PPE family.</text>
</comment>
<comment type="sequence caution" evidence="2">
    <conflict type="frameshift">
        <sequence resource="EMBL-CDS" id="CCP45828"/>
    </conflict>
</comment>
<protein>
    <recommendedName>
        <fullName>Uncharacterized PPE family protein PPE47/PPE48</fullName>
    </recommendedName>
</protein>
<feature type="chain" id="PRO_0000217852" description="Uncharacterized PPE family protein PPE47/PPE48">
    <location>
        <begin position="1"/>
        <end position="435"/>
    </location>
</feature>
<organism>
    <name type="scientific">Mycobacterium tuberculosis (strain ATCC 25618 / H37Rv)</name>
    <dbReference type="NCBI Taxonomy" id="83332"/>
    <lineage>
        <taxon>Bacteria</taxon>
        <taxon>Bacillati</taxon>
        <taxon>Actinomycetota</taxon>
        <taxon>Actinomycetes</taxon>
        <taxon>Mycobacteriales</taxon>
        <taxon>Mycobacteriaceae</taxon>
        <taxon>Mycobacterium</taxon>
        <taxon>Mycobacterium tuberculosis complex</taxon>
    </lineage>
</organism>
<dbReference type="EMBL" id="AL123456">
    <property type="protein sequence ID" value="CCP45828.1"/>
    <property type="status" value="ALT_FRAME"/>
    <property type="molecule type" value="Genomic_DNA"/>
</dbReference>
<dbReference type="SMR" id="P9WHY7"/>
<dbReference type="PaxDb" id="83332-Rv3022c"/>
<dbReference type="TubercuList" id="Rv3021c"/>
<dbReference type="TubercuList" id="Rv3022c"/>
<dbReference type="eggNOG" id="COG5651">
    <property type="taxonomic scope" value="Bacteria"/>
</dbReference>
<dbReference type="InParanoid" id="P9WHY7"/>
<dbReference type="Proteomes" id="UP000001584">
    <property type="component" value="Chromosome"/>
</dbReference>
<dbReference type="GO" id="GO:0052572">
    <property type="term" value="P:response to host immune response"/>
    <property type="evidence" value="ECO:0000318"/>
    <property type="project" value="GO_Central"/>
</dbReference>
<dbReference type="FunFam" id="1.20.1260.20:FF:000001">
    <property type="entry name" value="PPE family protein PPE41"/>
    <property type="match status" value="1"/>
</dbReference>
<dbReference type="Gene3D" id="1.20.1260.20">
    <property type="entry name" value="PPE superfamily"/>
    <property type="match status" value="1"/>
</dbReference>
<dbReference type="InterPro" id="IPR043641">
    <property type="entry name" value="PPE-PPW_C"/>
</dbReference>
<dbReference type="InterPro" id="IPR000030">
    <property type="entry name" value="PPE_dom"/>
</dbReference>
<dbReference type="InterPro" id="IPR038332">
    <property type="entry name" value="PPE_sf"/>
</dbReference>
<dbReference type="PANTHER" id="PTHR46766">
    <property type="entry name" value="GLUTAMINE-RICH PROTEIN 2"/>
    <property type="match status" value="1"/>
</dbReference>
<dbReference type="PANTHER" id="PTHR46766:SF1">
    <property type="entry name" value="GLUTAMINE-RICH PROTEIN 2"/>
    <property type="match status" value="1"/>
</dbReference>
<dbReference type="Pfam" id="PF00823">
    <property type="entry name" value="PPE"/>
    <property type="match status" value="1"/>
</dbReference>
<dbReference type="Pfam" id="PF18878">
    <property type="entry name" value="PPE-PPW"/>
    <property type="match status" value="1"/>
</dbReference>
<dbReference type="SUPFAM" id="SSF140459">
    <property type="entry name" value="PE/PPE dimer-like"/>
    <property type="match status" value="1"/>
</dbReference>
<gene>
    <name type="primary">PPE47/ppe48</name>
    <name type="ordered locus">Rv3021c/Rv3022c</name>
    <name type="ORF">MTV012.35c/MTV012.36c</name>
</gene>